<feature type="chain" id="PRO_0000242384" description="Large ribosomal subunit protein uL4">
    <location>
        <begin position="1"/>
        <end position="206"/>
    </location>
</feature>
<gene>
    <name evidence="1" type="primary">rplD</name>
    <name type="ordered locus">Jann_0584</name>
</gene>
<comment type="function">
    <text evidence="1">One of the primary rRNA binding proteins, this protein initially binds near the 5'-end of the 23S rRNA. It is important during the early stages of 50S assembly. It makes multiple contacts with different domains of the 23S rRNA in the assembled 50S subunit and ribosome.</text>
</comment>
<comment type="function">
    <text evidence="1">Forms part of the polypeptide exit tunnel.</text>
</comment>
<comment type="subunit">
    <text evidence="1">Part of the 50S ribosomal subunit.</text>
</comment>
<comment type="similarity">
    <text evidence="1">Belongs to the universal ribosomal protein uL4 family.</text>
</comment>
<keyword id="KW-1185">Reference proteome</keyword>
<keyword id="KW-0687">Ribonucleoprotein</keyword>
<keyword id="KW-0689">Ribosomal protein</keyword>
<keyword id="KW-0694">RNA-binding</keyword>
<keyword id="KW-0699">rRNA-binding</keyword>
<evidence type="ECO:0000255" key="1">
    <source>
        <dbReference type="HAMAP-Rule" id="MF_01328"/>
    </source>
</evidence>
<evidence type="ECO:0000305" key="2"/>
<organism>
    <name type="scientific">Jannaschia sp. (strain CCS1)</name>
    <dbReference type="NCBI Taxonomy" id="290400"/>
    <lineage>
        <taxon>Bacteria</taxon>
        <taxon>Pseudomonadati</taxon>
        <taxon>Pseudomonadota</taxon>
        <taxon>Alphaproteobacteria</taxon>
        <taxon>Rhodobacterales</taxon>
        <taxon>Roseobacteraceae</taxon>
        <taxon>Jannaschia</taxon>
    </lineage>
</organism>
<proteinExistence type="inferred from homology"/>
<name>RL4_JANSC</name>
<protein>
    <recommendedName>
        <fullName evidence="1">Large ribosomal subunit protein uL4</fullName>
    </recommendedName>
    <alternativeName>
        <fullName evidence="2">50S ribosomal protein L4</fullName>
    </alternativeName>
</protein>
<reference key="1">
    <citation type="submission" date="2006-02" db="EMBL/GenBank/DDBJ databases">
        <title>Complete sequence of chromosome of Jannaschia sp. CCS1.</title>
        <authorList>
            <consortium name="US DOE Joint Genome Institute"/>
            <person name="Copeland A."/>
            <person name="Lucas S."/>
            <person name="Lapidus A."/>
            <person name="Barry K."/>
            <person name="Detter J.C."/>
            <person name="Glavina del Rio T."/>
            <person name="Hammon N."/>
            <person name="Israni S."/>
            <person name="Pitluck S."/>
            <person name="Brettin T."/>
            <person name="Bruce D."/>
            <person name="Han C."/>
            <person name="Tapia R."/>
            <person name="Gilna P."/>
            <person name="Chertkov O."/>
            <person name="Saunders E."/>
            <person name="Schmutz J."/>
            <person name="Larimer F."/>
            <person name="Land M."/>
            <person name="Kyrpides N."/>
            <person name="Lykidis A."/>
            <person name="Moran M.A."/>
            <person name="Belas R."/>
            <person name="Ye W."/>
            <person name="Buchan A."/>
            <person name="Gonzalez J.M."/>
            <person name="Schell M.A."/>
            <person name="Richardson P."/>
        </authorList>
    </citation>
    <scope>NUCLEOTIDE SEQUENCE [LARGE SCALE GENOMIC DNA]</scope>
    <source>
        <strain>CCS1</strain>
    </source>
</reference>
<accession>Q28UW1</accession>
<dbReference type="EMBL" id="CP000264">
    <property type="protein sequence ID" value="ABD53501.1"/>
    <property type="molecule type" value="Genomic_DNA"/>
</dbReference>
<dbReference type="RefSeq" id="WP_011453709.1">
    <property type="nucleotide sequence ID" value="NC_007802.1"/>
</dbReference>
<dbReference type="SMR" id="Q28UW1"/>
<dbReference type="STRING" id="290400.Jann_0584"/>
<dbReference type="KEGG" id="jan:Jann_0584"/>
<dbReference type="eggNOG" id="COG0088">
    <property type="taxonomic scope" value="Bacteria"/>
</dbReference>
<dbReference type="HOGENOM" id="CLU_041575_5_1_5"/>
<dbReference type="OrthoDB" id="9803201at2"/>
<dbReference type="Proteomes" id="UP000008326">
    <property type="component" value="Chromosome"/>
</dbReference>
<dbReference type="GO" id="GO:1990904">
    <property type="term" value="C:ribonucleoprotein complex"/>
    <property type="evidence" value="ECO:0007669"/>
    <property type="project" value="UniProtKB-KW"/>
</dbReference>
<dbReference type="GO" id="GO:0005840">
    <property type="term" value="C:ribosome"/>
    <property type="evidence" value="ECO:0007669"/>
    <property type="project" value="UniProtKB-KW"/>
</dbReference>
<dbReference type="GO" id="GO:0019843">
    <property type="term" value="F:rRNA binding"/>
    <property type="evidence" value="ECO:0007669"/>
    <property type="project" value="UniProtKB-UniRule"/>
</dbReference>
<dbReference type="GO" id="GO:0003735">
    <property type="term" value="F:structural constituent of ribosome"/>
    <property type="evidence" value="ECO:0007669"/>
    <property type="project" value="InterPro"/>
</dbReference>
<dbReference type="GO" id="GO:0006412">
    <property type="term" value="P:translation"/>
    <property type="evidence" value="ECO:0007669"/>
    <property type="project" value="UniProtKB-UniRule"/>
</dbReference>
<dbReference type="Gene3D" id="3.40.1370.10">
    <property type="match status" value="1"/>
</dbReference>
<dbReference type="HAMAP" id="MF_01328_B">
    <property type="entry name" value="Ribosomal_uL4_B"/>
    <property type="match status" value="1"/>
</dbReference>
<dbReference type="InterPro" id="IPR002136">
    <property type="entry name" value="Ribosomal_uL4"/>
</dbReference>
<dbReference type="InterPro" id="IPR013005">
    <property type="entry name" value="Ribosomal_uL4-like"/>
</dbReference>
<dbReference type="InterPro" id="IPR023574">
    <property type="entry name" value="Ribosomal_uL4_dom_sf"/>
</dbReference>
<dbReference type="NCBIfam" id="TIGR03953">
    <property type="entry name" value="rplD_bact"/>
    <property type="match status" value="1"/>
</dbReference>
<dbReference type="PANTHER" id="PTHR10746">
    <property type="entry name" value="50S RIBOSOMAL PROTEIN L4"/>
    <property type="match status" value="1"/>
</dbReference>
<dbReference type="PANTHER" id="PTHR10746:SF6">
    <property type="entry name" value="LARGE RIBOSOMAL SUBUNIT PROTEIN UL4M"/>
    <property type="match status" value="1"/>
</dbReference>
<dbReference type="Pfam" id="PF00573">
    <property type="entry name" value="Ribosomal_L4"/>
    <property type="match status" value="1"/>
</dbReference>
<dbReference type="SUPFAM" id="SSF52166">
    <property type="entry name" value="Ribosomal protein L4"/>
    <property type="match status" value="1"/>
</dbReference>
<sequence length="206" mass="22561">MKVDVIKLDGKKAGSVDLDEALFGLEPRADILHRVVRWQRNNAQAGTHKVKTRREVSYSTKKIYRQKGTGGARHGARSAPIFRGGGVYKGPTPRSHGHELTKKFRKLGLRHALSAKAAEGRLVVIESIAMDEAKTSALAKQVKEMGWKRALIIDGSDVDANFAQAARNIEGLDVLPTMGANVYDILKRDTLVITKAGVEALEARLK</sequence>